<dbReference type="EC" id="3.1.2.12"/>
<dbReference type="EMBL" id="AB025408">
    <property type="protein sequence ID" value="BAA84693.1"/>
    <property type="molecule type" value="mRNA"/>
</dbReference>
<dbReference type="EMBL" id="AK007527">
    <property type="protein sequence ID" value="BAB25090.1"/>
    <property type="molecule type" value="mRNA"/>
</dbReference>
<dbReference type="EMBL" id="AK010683">
    <property type="protein sequence ID" value="BAB27115.1"/>
    <property type="status" value="ALT_INIT"/>
    <property type="molecule type" value="mRNA"/>
</dbReference>
<dbReference type="EMBL" id="AK021209">
    <property type="protein sequence ID" value="BAB32330.1"/>
    <property type="molecule type" value="mRNA"/>
</dbReference>
<dbReference type="EMBL" id="AK079131">
    <property type="protein sequence ID" value="BAC37555.1"/>
    <property type="molecule type" value="mRNA"/>
</dbReference>
<dbReference type="EMBL" id="AK088115">
    <property type="protein sequence ID" value="BAC40154.1"/>
    <property type="molecule type" value="mRNA"/>
</dbReference>
<dbReference type="EMBL" id="BC046766">
    <property type="protein sequence ID" value="AAH46766.2"/>
    <property type="molecule type" value="mRNA"/>
</dbReference>
<dbReference type="CCDS" id="CCDS36975.1"/>
<dbReference type="RefSeq" id="NP_058599.1">
    <property type="nucleotide sequence ID" value="NM_016903.5"/>
</dbReference>
<dbReference type="SMR" id="Q9R0P3"/>
<dbReference type="BioGRID" id="199507">
    <property type="interactions" value="4"/>
</dbReference>
<dbReference type="FunCoup" id="Q9R0P3">
    <property type="interactions" value="1977"/>
</dbReference>
<dbReference type="IntAct" id="Q9R0P3">
    <property type="interactions" value="1"/>
</dbReference>
<dbReference type="MINT" id="Q9R0P3"/>
<dbReference type="STRING" id="10090.ENSMUSP00000135394"/>
<dbReference type="ChEMBL" id="CHEMBL3259483"/>
<dbReference type="ESTHER" id="mouse-ES10">
    <property type="family name" value="A85-EsteraseD-FGH"/>
</dbReference>
<dbReference type="GlyGen" id="Q9R0P3">
    <property type="glycosylation" value="1 site, 1 O-linked glycan (1 site)"/>
</dbReference>
<dbReference type="iPTMnet" id="Q9R0P3"/>
<dbReference type="PhosphoSitePlus" id="Q9R0P3"/>
<dbReference type="SwissPalm" id="Q9R0P3"/>
<dbReference type="jPOST" id="Q9R0P3"/>
<dbReference type="PaxDb" id="10090-ENSMUSP00000022573"/>
<dbReference type="ProteomicsDB" id="275652"/>
<dbReference type="Pumba" id="Q9R0P3"/>
<dbReference type="Antibodypedia" id="23747">
    <property type="antibodies" value="219 antibodies from 29 providers"/>
</dbReference>
<dbReference type="DNASU" id="13885"/>
<dbReference type="Ensembl" id="ENSMUST00000022573.17">
    <property type="protein sequence ID" value="ENSMUSP00000022573.11"/>
    <property type="gene ID" value="ENSMUSG00000021996.17"/>
</dbReference>
<dbReference type="GeneID" id="13885"/>
<dbReference type="KEGG" id="mmu:13885"/>
<dbReference type="UCSC" id="uc007uqd.2">
    <property type="organism name" value="mouse"/>
</dbReference>
<dbReference type="AGR" id="MGI:95421"/>
<dbReference type="CTD" id="2098"/>
<dbReference type="MGI" id="MGI:95421">
    <property type="gene designation" value="Esd"/>
</dbReference>
<dbReference type="VEuPathDB" id="HostDB:ENSMUSG00000021996"/>
<dbReference type="eggNOG" id="KOG3101">
    <property type="taxonomic scope" value="Eukaryota"/>
</dbReference>
<dbReference type="GeneTree" id="ENSGT00390000011864"/>
<dbReference type="HOGENOM" id="CLU_056472_0_0_1"/>
<dbReference type="InParanoid" id="Q9R0P3"/>
<dbReference type="OMA" id="PSDCPWG"/>
<dbReference type="OrthoDB" id="420518at2759"/>
<dbReference type="PhylomeDB" id="Q9R0P3"/>
<dbReference type="TreeFam" id="TF300793"/>
<dbReference type="Reactome" id="R-MMU-156590">
    <property type="pathway name" value="Glutathione conjugation"/>
</dbReference>
<dbReference type="BioGRID-ORCS" id="13885">
    <property type="hits" value="4 hits in 77 CRISPR screens"/>
</dbReference>
<dbReference type="ChiTaRS" id="Esd">
    <property type="organism name" value="mouse"/>
</dbReference>
<dbReference type="PRO" id="PR:Q9R0P3"/>
<dbReference type="Proteomes" id="UP000000589">
    <property type="component" value="Chromosome 14"/>
</dbReference>
<dbReference type="RNAct" id="Q9R0P3">
    <property type="molecule type" value="protein"/>
</dbReference>
<dbReference type="Bgee" id="ENSMUSG00000021996">
    <property type="expression patterns" value="Expressed in right kidney and 230 other cell types or tissues"/>
</dbReference>
<dbReference type="ExpressionAtlas" id="Q9R0P3">
    <property type="expression patterns" value="baseline and differential"/>
</dbReference>
<dbReference type="GO" id="GO:0031410">
    <property type="term" value="C:cytoplasmic vesicle"/>
    <property type="evidence" value="ECO:0007669"/>
    <property type="project" value="UniProtKB-KW"/>
</dbReference>
<dbReference type="GO" id="GO:0052689">
    <property type="term" value="F:carboxylic ester hydrolase activity"/>
    <property type="evidence" value="ECO:0007669"/>
    <property type="project" value="UniProtKB-KW"/>
</dbReference>
<dbReference type="GO" id="GO:0016788">
    <property type="term" value="F:hydrolase activity, acting on ester bonds"/>
    <property type="evidence" value="ECO:0000314"/>
    <property type="project" value="MGI"/>
</dbReference>
<dbReference type="GO" id="GO:0042802">
    <property type="term" value="F:identical protein binding"/>
    <property type="evidence" value="ECO:0007669"/>
    <property type="project" value="Ensembl"/>
</dbReference>
<dbReference type="GO" id="GO:0018738">
    <property type="term" value="F:S-formylglutathione hydrolase activity"/>
    <property type="evidence" value="ECO:0007669"/>
    <property type="project" value="UniProtKB-EC"/>
</dbReference>
<dbReference type="GO" id="GO:0046294">
    <property type="term" value="P:formaldehyde catabolic process"/>
    <property type="evidence" value="ECO:0007669"/>
    <property type="project" value="InterPro"/>
</dbReference>
<dbReference type="FunFam" id="3.40.50.1820:FF:000002">
    <property type="entry name" value="S-formylglutathione hydrolase"/>
    <property type="match status" value="1"/>
</dbReference>
<dbReference type="Gene3D" id="3.40.50.1820">
    <property type="entry name" value="alpha/beta hydrolase"/>
    <property type="match status" value="1"/>
</dbReference>
<dbReference type="InterPro" id="IPR029058">
    <property type="entry name" value="AB_hydrolase_fold"/>
</dbReference>
<dbReference type="InterPro" id="IPR000801">
    <property type="entry name" value="Esterase-like"/>
</dbReference>
<dbReference type="InterPro" id="IPR014186">
    <property type="entry name" value="S-formylglutathione_hydrol"/>
</dbReference>
<dbReference type="NCBIfam" id="TIGR02821">
    <property type="entry name" value="fghA_ester_D"/>
    <property type="match status" value="1"/>
</dbReference>
<dbReference type="PANTHER" id="PTHR10061">
    <property type="entry name" value="S-FORMYLGLUTATHIONE HYDROLASE"/>
    <property type="match status" value="1"/>
</dbReference>
<dbReference type="PANTHER" id="PTHR10061:SF0">
    <property type="entry name" value="S-FORMYLGLUTATHIONE HYDROLASE"/>
    <property type="match status" value="1"/>
</dbReference>
<dbReference type="Pfam" id="PF00756">
    <property type="entry name" value="Esterase"/>
    <property type="match status" value="1"/>
</dbReference>
<dbReference type="SUPFAM" id="SSF53474">
    <property type="entry name" value="alpha/beta-Hydrolases"/>
    <property type="match status" value="1"/>
</dbReference>
<keyword id="KW-0007">Acetylation</keyword>
<keyword id="KW-0963">Cytoplasm</keyword>
<keyword id="KW-0968">Cytoplasmic vesicle</keyword>
<keyword id="KW-0378">Hydrolase</keyword>
<keyword id="KW-1185">Reference proteome</keyword>
<keyword id="KW-0719">Serine esterase</keyword>
<comment type="function">
    <text evidence="1">Serine hydrolase involved in the detoxification of formaldehyde.</text>
</comment>
<comment type="catalytic activity">
    <reaction>
        <text>S-formylglutathione + H2O = formate + glutathione + H(+)</text>
        <dbReference type="Rhea" id="RHEA:14961"/>
        <dbReference type="ChEBI" id="CHEBI:15377"/>
        <dbReference type="ChEBI" id="CHEBI:15378"/>
        <dbReference type="ChEBI" id="CHEBI:15740"/>
        <dbReference type="ChEBI" id="CHEBI:57688"/>
        <dbReference type="ChEBI" id="CHEBI:57925"/>
        <dbReference type="EC" id="3.1.2.12"/>
    </reaction>
</comment>
<comment type="subunit">
    <text evidence="1">Homodimer.</text>
</comment>
<comment type="subcellular location">
    <subcellularLocation>
        <location>Cytoplasm</location>
    </subcellularLocation>
    <subcellularLocation>
        <location evidence="1">Cytoplasmic vesicle</location>
    </subcellularLocation>
</comment>
<comment type="similarity">
    <text evidence="2">Belongs to the esterase D family.</text>
</comment>
<comment type="sequence caution" evidence="2">
    <conflict type="erroneous initiation">
        <sequence resource="EMBL-CDS" id="BAB27115"/>
    </conflict>
</comment>
<accession>Q9R0P3</accession>
<accession>Q80ZX4</accession>
<accession>Q9CWI4</accession>
<proteinExistence type="evidence at protein level"/>
<evidence type="ECO:0000250" key="1"/>
<evidence type="ECO:0000305" key="2"/>
<evidence type="ECO:0007744" key="3">
    <source>
    </source>
</evidence>
<reference key="1">
    <citation type="submission" date="1999-03" db="EMBL/GenBank/DDBJ databases">
        <title>Mouse homologue of human esterase D sid478.</title>
        <authorList>
            <person name="Seki N."/>
            <person name="Hattori A."/>
            <person name="Hayashi A."/>
            <person name="Kozuma S."/>
            <person name="Muramatsu M."/>
            <person name="Saito T."/>
        </authorList>
    </citation>
    <scope>NUCLEOTIDE SEQUENCE [MRNA]</scope>
</reference>
<reference key="2">
    <citation type="journal article" date="2005" name="Science">
        <title>The transcriptional landscape of the mammalian genome.</title>
        <authorList>
            <person name="Carninci P."/>
            <person name="Kasukawa T."/>
            <person name="Katayama S."/>
            <person name="Gough J."/>
            <person name="Frith M.C."/>
            <person name="Maeda N."/>
            <person name="Oyama R."/>
            <person name="Ravasi T."/>
            <person name="Lenhard B."/>
            <person name="Wells C."/>
            <person name="Kodzius R."/>
            <person name="Shimokawa K."/>
            <person name="Bajic V.B."/>
            <person name="Brenner S.E."/>
            <person name="Batalov S."/>
            <person name="Forrest A.R."/>
            <person name="Zavolan M."/>
            <person name="Davis M.J."/>
            <person name="Wilming L.G."/>
            <person name="Aidinis V."/>
            <person name="Allen J.E."/>
            <person name="Ambesi-Impiombato A."/>
            <person name="Apweiler R."/>
            <person name="Aturaliya R.N."/>
            <person name="Bailey T.L."/>
            <person name="Bansal M."/>
            <person name="Baxter L."/>
            <person name="Beisel K.W."/>
            <person name="Bersano T."/>
            <person name="Bono H."/>
            <person name="Chalk A.M."/>
            <person name="Chiu K.P."/>
            <person name="Choudhary V."/>
            <person name="Christoffels A."/>
            <person name="Clutterbuck D.R."/>
            <person name="Crowe M.L."/>
            <person name="Dalla E."/>
            <person name="Dalrymple B.P."/>
            <person name="de Bono B."/>
            <person name="Della Gatta G."/>
            <person name="di Bernardo D."/>
            <person name="Down T."/>
            <person name="Engstrom P."/>
            <person name="Fagiolini M."/>
            <person name="Faulkner G."/>
            <person name="Fletcher C.F."/>
            <person name="Fukushima T."/>
            <person name="Furuno M."/>
            <person name="Futaki S."/>
            <person name="Gariboldi M."/>
            <person name="Georgii-Hemming P."/>
            <person name="Gingeras T.R."/>
            <person name="Gojobori T."/>
            <person name="Green R.E."/>
            <person name="Gustincich S."/>
            <person name="Harbers M."/>
            <person name="Hayashi Y."/>
            <person name="Hensch T.K."/>
            <person name="Hirokawa N."/>
            <person name="Hill D."/>
            <person name="Huminiecki L."/>
            <person name="Iacono M."/>
            <person name="Ikeo K."/>
            <person name="Iwama A."/>
            <person name="Ishikawa T."/>
            <person name="Jakt M."/>
            <person name="Kanapin A."/>
            <person name="Katoh M."/>
            <person name="Kawasawa Y."/>
            <person name="Kelso J."/>
            <person name="Kitamura H."/>
            <person name="Kitano H."/>
            <person name="Kollias G."/>
            <person name="Krishnan S.P."/>
            <person name="Kruger A."/>
            <person name="Kummerfeld S.K."/>
            <person name="Kurochkin I.V."/>
            <person name="Lareau L.F."/>
            <person name="Lazarevic D."/>
            <person name="Lipovich L."/>
            <person name="Liu J."/>
            <person name="Liuni S."/>
            <person name="McWilliam S."/>
            <person name="Madan Babu M."/>
            <person name="Madera M."/>
            <person name="Marchionni L."/>
            <person name="Matsuda H."/>
            <person name="Matsuzawa S."/>
            <person name="Miki H."/>
            <person name="Mignone F."/>
            <person name="Miyake S."/>
            <person name="Morris K."/>
            <person name="Mottagui-Tabar S."/>
            <person name="Mulder N."/>
            <person name="Nakano N."/>
            <person name="Nakauchi H."/>
            <person name="Ng P."/>
            <person name="Nilsson R."/>
            <person name="Nishiguchi S."/>
            <person name="Nishikawa S."/>
            <person name="Nori F."/>
            <person name="Ohara O."/>
            <person name="Okazaki Y."/>
            <person name="Orlando V."/>
            <person name="Pang K.C."/>
            <person name="Pavan W.J."/>
            <person name="Pavesi G."/>
            <person name="Pesole G."/>
            <person name="Petrovsky N."/>
            <person name="Piazza S."/>
            <person name="Reed J."/>
            <person name="Reid J.F."/>
            <person name="Ring B.Z."/>
            <person name="Ringwald M."/>
            <person name="Rost B."/>
            <person name="Ruan Y."/>
            <person name="Salzberg S.L."/>
            <person name="Sandelin A."/>
            <person name="Schneider C."/>
            <person name="Schoenbach C."/>
            <person name="Sekiguchi K."/>
            <person name="Semple C.A."/>
            <person name="Seno S."/>
            <person name="Sessa L."/>
            <person name="Sheng Y."/>
            <person name="Shibata Y."/>
            <person name="Shimada H."/>
            <person name="Shimada K."/>
            <person name="Silva D."/>
            <person name="Sinclair B."/>
            <person name="Sperling S."/>
            <person name="Stupka E."/>
            <person name="Sugiura K."/>
            <person name="Sultana R."/>
            <person name="Takenaka Y."/>
            <person name="Taki K."/>
            <person name="Tammoja K."/>
            <person name="Tan S.L."/>
            <person name="Tang S."/>
            <person name="Taylor M.S."/>
            <person name="Tegner J."/>
            <person name="Teichmann S.A."/>
            <person name="Ueda H.R."/>
            <person name="van Nimwegen E."/>
            <person name="Verardo R."/>
            <person name="Wei C.L."/>
            <person name="Yagi K."/>
            <person name="Yamanishi H."/>
            <person name="Zabarovsky E."/>
            <person name="Zhu S."/>
            <person name="Zimmer A."/>
            <person name="Hide W."/>
            <person name="Bult C."/>
            <person name="Grimmond S.M."/>
            <person name="Teasdale R.D."/>
            <person name="Liu E.T."/>
            <person name="Brusic V."/>
            <person name="Quackenbush J."/>
            <person name="Wahlestedt C."/>
            <person name="Mattick J.S."/>
            <person name="Hume D.A."/>
            <person name="Kai C."/>
            <person name="Sasaki D."/>
            <person name="Tomaru Y."/>
            <person name="Fukuda S."/>
            <person name="Kanamori-Katayama M."/>
            <person name="Suzuki M."/>
            <person name="Aoki J."/>
            <person name="Arakawa T."/>
            <person name="Iida J."/>
            <person name="Imamura K."/>
            <person name="Itoh M."/>
            <person name="Kato T."/>
            <person name="Kawaji H."/>
            <person name="Kawagashira N."/>
            <person name="Kawashima T."/>
            <person name="Kojima M."/>
            <person name="Kondo S."/>
            <person name="Konno H."/>
            <person name="Nakano K."/>
            <person name="Ninomiya N."/>
            <person name="Nishio T."/>
            <person name="Okada M."/>
            <person name="Plessy C."/>
            <person name="Shibata K."/>
            <person name="Shiraki T."/>
            <person name="Suzuki S."/>
            <person name="Tagami M."/>
            <person name="Waki K."/>
            <person name="Watahiki A."/>
            <person name="Okamura-Oho Y."/>
            <person name="Suzuki H."/>
            <person name="Kawai J."/>
            <person name="Hayashizaki Y."/>
        </authorList>
    </citation>
    <scope>NUCLEOTIDE SEQUENCE [LARGE SCALE MRNA]</scope>
    <source>
        <strain>C57BL/6J</strain>
        <strain>NOD</strain>
        <tissue>Embryo</tissue>
    </source>
</reference>
<reference key="3">
    <citation type="journal article" date="2004" name="Genome Res.">
        <title>The status, quality, and expansion of the NIH full-length cDNA project: the Mammalian Gene Collection (MGC).</title>
        <authorList>
            <consortium name="The MGC Project Team"/>
        </authorList>
    </citation>
    <scope>NUCLEOTIDE SEQUENCE [LARGE SCALE MRNA]</scope>
    <source>
        <strain>C57BL/6J</strain>
        <tissue>Brain</tissue>
    </source>
</reference>
<reference key="4">
    <citation type="journal article" date="2010" name="Cell">
        <title>A tissue-specific atlas of mouse protein phosphorylation and expression.</title>
        <authorList>
            <person name="Huttlin E.L."/>
            <person name="Jedrychowski M.P."/>
            <person name="Elias J.E."/>
            <person name="Goswami T."/>
            <person name="Rad R."/>
            <person name="Beausoleil S.A."/>
            <person name="Villen J."/>
            <person name="Haas W."/>
            <person name="Sowa M.E."/>
            <person name="Gygi S.P."/>
        </authorList>
    </citation>
    <scope>IDENTIFICATION BY MASS SPECTROMETRY [LARGE SCALE ANALYSIS]</scope>
    <source>
        <tissue>Brain</tissue>
        <tissue>Brown adipose tissue</tissue>
        <tissue>Heart</tissue>
        <tissue>Kidney</tissue>
        <tissue>Liver</tissue>
        <tissue>Lung</tissue>
        <tissue>Pancreas</tissue>
        <tissue>Spleen</tissue>
        <tissue>Testis</tissue>
    </source>
</reference>
<reference key="5">
    <citation type="journal article" date="2013" name="Mol. Cell">
        <title>SIRT5-mediated lysine desuccinylation impacts diverse metabolic pathways.</title>
        <authorList>
            <person name="Park J."/>
            <person name="Chen Y."/>
            <person name="Tishkoff D.X."/>
            <person name="Peng C."/>
            <person name="Tan M."/>
            <person name="Dai L."/>
            <person name="Xie Z."/>
            <person name="Zhang Y."/>
            <person name="Zwaans B.M."/>
            <person name="Skinner M.E."/>
            <person name="Lombard D.B."/>
            <person name="Zhao Y."/>
        </authorList>
    </citation>
    <scope>ACETYLATION [LARGE SCALE ANALYSIS] AT ALA-2 AND LYS-200</scope>
    <scope>SUCCINYLATION [LARGE SCALE ANALYSIS] AT LYS-4</scope>
    <scope>CLEAVAGE OF INITIATOR METHIONINE [LARGE SCALE ANALYSIS]</scope>
    <scope>IDENTIFICATION BY MASS SPECTROMETRY [LARGE SCALE ANALYSIS]</scope>
    <source>
        <tissue>Embryonic fibroblast</tissue>
        <tissue>Liver</tissue>
    </source>
</reference>
<gene>
    <name type="primary">Esd</name>
    <name type="synonym">Es10</name>
    <name type="synonym">Sid478</name>
</gene>
<feature type="initiator methionine" description="Removed" evidence="3">
    <location>
        <position position="1"/>
    </location>
</feature>
<feature type="chain" id="PRO_0000210340" description="S-formylglutathione hydrolase">
    <location>
        <begin position="2"/>
        <end position="282"/>
    </location>
</feature>
<feature type="active site" description="Charge relay system" evidence="1">
    <location>
        <position position="149"/>
    </location>
</feature>
<feature type="active site" description="Charge relay system" evidence="1">
    <location>
        <position position="226"/>
    </location>
</feature>
<feature type="active site" description="Charge relay system" evidence="1">
    <location>
        <position position="260"/>
    </location>
</feature>
<feature type="modified residue" description="N-acetylalanine" evidence="3">
    <location>
        <position position="2"/>
    </location>
</feature>
<feature type="modified residue" description="N6-succinyllysine" evidence="3">
    <location>
        <position position="4"/>
    </location>
</feature>
<feature type="modified residue" description="N6-acetyllysine" evidence="3">
    <location>
        <position position="200"/>
    </location>
</feature>
<feature type="sequence conflict" description="In Ref. 2; BAB27115." evidence="2" ref="2">
    <original>M</original>
    <variation>V</variation>
    <location>
        <position position="1"/>
    </location>
</feature>
<name>ESTD_MOUSE</name>
<organism>
    <name type="scientific">Mus musculus</name>
    <name type="common">Mouse</name>
    <dbReference type="NCBI Taxonomy" id="10090"/>
    <lineage>
        <taxon>Eukaryota</taxon>
        <taxon>Metazoa</taxon>
        <taxon>Chordata</taxon>
        <taxon>Craniata</taxon>
        <taxon>Vertebrata</taxon>
        <taxon>Euteleostomi</taxon>
        <taxon>Mammalia</taxon>
        <taxon>Eutheria</taxon>
        <taxon>Euarchontoglires</taxon>
        <taxon>Glires</taxon>
        <taxon>Rodentia</taxon>
        <taxon>Myomorpha</taxon>
        <taxon>Muroidea</taxon>
        <taxon>Muridae</taxon>
        <taxon>Murinae</taxon>
        <taxon>Mus</taxon>
        <taxon>Mus</taxon>
    </lineage>
</organism>
<protein>
    <recommendedName>
        <fullName>S-formylglutathione hydrolase</fullName>
        <shortName>FGH</shortName>
        <ecNumber>3.1.2.12</ecNumber>
    </recommendedName>
    <alternativeName>
        <fullName>Esterase 10</fullName>
    </alternativeName>
    <alternativeName>
        <fullName>Esterase D</fullName>
    </alternativeName>
    <alternativeName>
        <fullName>Sid 478</fullName>
    </alternativeName>
</protein>
<sequence length="282" mass="31320">MALKQISSNRCFGGLQKVFEHSSVELKCKMRFAVYLPPQAESGKCPALYWLSGLTCTEQNFISKSGYQQAASEHGLVVIAPDTSPRGCNIKGEDDSWDFGTGAGFYVNATEDPWKANYRMYSYVTEELPQLINANFPVDPQRMSIFGHSMGGHGALICALKNPGKYRSVSAFAPICNPVLCSWGKKAFSGYLGPDESKWKAYDATCLVKAYSGSQIDILIDQGKDDEFLSNGQLLPDNFIAACTEKKIPVVFRLQEGYDHSYYFIATFIADHIRHHAKYLNA</sequence>